<evidence type="ECO:0000250" key="1"/>
<evidence type="ECO:0000255" key="2">
    <source>
        <dbReference type="PROSITE-ProRule" id="PRU01096"/>
    </source>
</evidence>
<evidence type="ECO:0000255" key="3">
    <source>
        <dbReference type="PROSITE-ProRule" id="PRU10061"/>
    </source>
</evidence>
<evidence type="ECO:0000269" key="4">
    <source ref="1"/>
</evidence>
<evidence type="ECO:0000305" key="5"/>
<evidence type="ECO:0007829" key="6">
    <source>
        <dbReference type="PDB" id="7CPL"/>
    </source>
</evidence>
<organism>
    <name type="scientific">Halalkalibacterium halodurans (strain ATCC BAA-125 / DSM 18197 / FERM 7344 / JCM 9153 / C-125)</name>
    <name type="common">Bacillus halodurans</name>
    <dbReference type="NCBI Taxonomy" id="272558"/>
    <lineage>
        <taxon>Bacteria</taxon>
        <taxon>Bacillati</taxon>
        <taxon>Bacillota</taxon>
        <taxon>Bacilli</taxon>
        <taxon>Bacillales</taxon>
        <taxon>Bacillaceae</taxon>
        <taxon>Halalkalibacterium (ex Joshi et al. 2022)</taxon>
    </lineage>
</organism>
<reference key="1">
    <citation type="journal article" date="1987" name="Agric. Biol. Chem.">
        <title>Nucleotide sequence of the xylanase A gene of alkalophilic Bacillus sp. strain C-125.</title>
        <authorList>
            <person name="Hamamoto T."/>
            <person name="Honda H."/>
            <person name="Kudo T."/>
            <person name="Horikoshi K."/>
        </authorList>
    </citation>
    <scope>NUCLEOTIDE SEQUENCE [GENOMIC DNA]</scope>
    <scope>PROTEIN SEQUENCE OF N-TERMINUS</scope>
    <source>
        <strain>ATCC BAA-125 / DSM 18197 / FERM 7344 / JCM 9153 / C-125</strain>
    </source>
</reference>
<reference key="2">
    <citation type="journal article" date="2000" name="Nucleic Acids Res.">
        <title>Complete genome sequence of the alkaliphilic bacterium Bacillus halodurans and genomic sequence comparison with Bacillus subtilis.</title>
        <authorList>
            <person name="Takami H."/>
            <person name="Nakasone K."/>
            <person name="Takaki Y."/>
            <person name="Maeno G."/>
            <person name="Sasaki R."/>
            <person name="Masui N."/>
            <person name="Fuji F."/>
            <person name="Hirama C."/>
            <person name="Nakamura Y."/>
            <person name="Ogasawara N."/>
            <person name="Kuhara S."/>
            <person name="Horikoshi K."/>
        </authorList>
    </citation>
    <scope>NUCLEOTIDE SEQUENCE [LARGE SCALE GENOMIC DNA]</scope>
    <source>
        <strain>ATCC BAA-125 / DSM 18197 / FERM 7344 / JCM 9153 / C-125</strain>
    </source>
</reference>
<sequence>MITLFRKPFVAGLAISLLVGGGIGNVAAAQGGPPKSGVFGENEKRNDQPFAWQVASLSERYQEQFDIGAAVEPYQLEGRQAQILKHHYNSLVAENAMKPESLQPREGEWNWEGADKIVEFARKHNMELRFHTLVWHSQVPEWFFIDEDGNRMVDETDPDKREANKQLLLERMENHIKTVVERYKDDVTSWDVVNEVIDDGGGLRESEWYQITGTDYIKVAFETARKYGGEEAKLYINDYNTEVPSKRDDLYNLVKDLLEQGVPIDGVGHQSHIQIGWPSIEDTRASFEKFTSLGLDNQVTELDMSLYGWPPTGAYTSYDDIPAELLQAQADRYDQLFELYEELAADISSVTFWGIADNHTWLDGRAREYNNGVGIDAPFVFDHNYRVKPAYWRIID</sequence>
<name>XYNA_HALH5</name>
<comment type="catalytic activity">
    <reaction>
        <text>Endohydrolysis of (1-&gt;4)-beta-D-xylosidic linkages in xylans.</text>
        <dbReference type="EC" id="3.2.1.8"/>
    </reaction>
</comment>
<comment type="biophysicochemical properties">
    <phDependence>
        <text>Active over a very broad pH range.</text>
    </phDependence>
</comment>
<comment type="pathway">
    <text>Glycan degradation; xylan degradation.</text>
</comment>
<comment type="subcellular location">
    <subcellularLocation>
        <location>Secreted</location>
    </subcellularLocation>
</comment>
<comment type="similarity">
    <text evidence="5">Belongs to the glycosyl hydrolase 10 (cellulase F) family.</text>
</comment>
<keyword id="KW-0002">3D-structure</keyword>
<keyword id="KW-0119">Carbohydrate metabolism</keyword>
<keyword id="KW-0903">Direct protein sequencing</keyword>
<keyword id="KW-0326">Glycosidase</keyword>
<keyword id="KW-0378">Hydrolase</keyword>
<keyword id="KW-0624">Polysaccharide degradation</keyword>
<keyword id="KW-1185">Reference proteome</keyword>
<keyword id="KW-0964">Secreted</keyword>
<keyword id="KW-0732">Signal</keyword>
<keyword id="KW-0858">Xylan degradation</keyword>
<dbReference type="EC" id="3.2.1.8"/>
<dbReference type="EMBL" id="D00087">
    <property type="protein sequence ID" value="BAA00055.1"/>
    <property type="molecule type" value="Genomic_DNA"/>
</dbReference>
<dbReference type="EMBL" id="BA000004">
    <property type="protein sequence ID" value="BAB05839.1"/>
    <property type="molecule type" value="Genomic_DNA"/>
</dbReference>
<dbReference type="PIR" id="H83914">
    <property type="entry name" value="H83914"/>
</dbReference>
<dbReference type="PIR" id="JD0003">
    <property type="entry name" value="JD0003"/>
</dbReference>
<dbReference type="RefSeq" id="WP_010898277.1">
    <property type="nucleotide sequence ID" value="NC_002570.2"/>
</dbReference>
<dbReference type="PDB" id="2UWF">
    <property type="method" value="X-ray"/>
    <property type="resolution" value="2.10 A"/>
    <property type="chains" value="A=48-396"/>
</dbReference>
<dbReference type="PDB" id="7CPK">
    <property type="method" value="X-ray"/>
    <property type="resolution" value="1.60 A"/>
    <property type="chains" value="A=46-396"/>
</dbReference>
<dbReference type="PDB" id="7CPL">
    <property type="method" value="X-ray"/>
    <property type="resolution" value="1.52 A"/>
    <property type="chains" value="A=46-396"/>
</dbReference>
<dbReference type="PDB" id="8XY0">
    <property type="method" value="X-ray"/>
    <property type="resolution" value="1.90 A"/>
    <property type="chains" value="A=46-396"/>
</dbReference>
<dbReference type="PDB" id="8Y1M">
    <property type="method" value="X-ray"/>
    <property type="resolution" value="1.80 A"/>
    <property type="chains" value="A/B=46-396"/>
</dbReference>
<dbReference type="PDBsum" id="2UWF"/>
<dbReference type="PDBsum" id="7CPK"/>
<dbReference type="PDBsum" id="7CPL"/>
<dbReference type="PDBsum" id="8XY0"/>
<dbReference type="PDBsum" id="8Y1M"/>
<dbReference type="SMR" id="P07528"/>
<dbReference type="STRING" id="272558.gene:10728018"/>
<dbReference type="CAZy" id="GH10">
    <property type="family name" value="Glycoside Hydrolase Family 10"/>
</dbReference>
<dbReference type="KEGG" id="bha:BH2120"/>
<dbReference type="eggNOG" id="COG3693">
    <property type="taxonomic scope" value="Bacteria"/>
</dbReference>
<dbReference type="HOGENOM" id="CLU_020161_6_1_9"/>
<dbReference type="OrthoDB" id="9809277at2"/>
<dbReference type="UniPathway" id="UPA00114"/>
<dbReference type="EvolutionaryTrace" id="P07528"/>
<dbReference type="Proteomes" id="UP000001258">
    <property type="component" value="Chromosome"/>
</dbReference>
<dbReference type="GO" id="GO:0005576">
    <property type="term" value="C:extracellular region"/>
    <property type="evidence" value="ECO:0007669"/>
    <property type="project" value="UniProtKB-SubCell"/>
</dbReference>
<dbReference type="GO" id="GO:0031176">
    <property type="term" value="F:endo-1,4-beta-xylanase activity"/>
    <property type="evidence" value="ECO:0007669"/>
    <property type="project" value="UniProtKB-EC"/>
</dbReference>
<dbReference type="GO" id="GO:0045493">
    <property type="term" value="P:xylan catabolic process"/>
    <property type="evidence" value="ECO:0007669"/>
    <property type="project" value="UniProtKB-UniPathway"/>
</dbReference>
<dbReference type="Gene3D" id="3.20.20.80">
    <property type="entry name" value="Glycosidases"/>
    <property type="match status" value="1"/>
</dbReference>
<dbReference type="InterPro" id="IPR044846">
    <property type="entry name" value="GH10"/>
</dbReference>
<dbReference type="InterPro" id="IPR031158">
    <property type="entry name" value="GH10_AS"/>
</dbReference>
<dbReference type="InterPro" id="IPR001000">
    <property type="entry name" value="GH10_dom"/>
</dbReference>
<dbReference type="InterPro" id="IPR017853">
    <property type="entry name" value="Glycoside_hydrolase_SF"/>
</dbReference>
<dbReference type="PANTHER" id="PTHR31490:SF90">
    <property type="entry name" value="ENDO-1,4-BETA-XYLANASE A"/>
    <property type="match status" value="1"/>
</dbReference>
<dbReference type="PANTHER" id="PTHR31490">
    <property type="entry name" value="GLYCOSYL HYDROLASE"/>
    <property type="match status" value="1"/>
</dbReference>
<dbReference type="Pfam" id="PF00331">
    <property type="entry name" value="Glyco_hydro_10"/>
    <property type="match status" value="1"/>
</dbReference>
<dbReference type="PRINTS" id="PR00134">
    <property type="entry name" value="GLHYDRLASE10"/>
</dbReference>
<dbReference type="SMART" id="SM00633">
    <property type="entry name" value="Glyco_10"/>
    <property type="match status" value="1"/>
</dbReference>
<dbReference type="SUPFAM" id="SSF51445">
    <property type="entry name" value="(Trans)glycosidases"/>
    <property type="match status" value="1"/>
</dbReference>
<dbReference type="PROSITE" id="PS00591">
    <property type="entry name" value="GH10_1"/>
    <property type="match status" value="1"/>
</dbReference>
<dbReference type="PROSITE" id="PS51760">
    <property type="entry name" value="GH10_2"/>
    <property type="match status" value="1"/>
</dbReference>
<accession>P07528</accession>
<accession>Q9JPV5</accession>
<proteinExistence type="evidence at protein level"/>
<protein>
    <recommendedName>
        <fullName>Endo-1,4-beta-xylanase A</fullName>
        <shortName>Xylanase A</shortName>
        <ecNumber>3.2.1.8</ecNumber>
    </recommendedName>
    <alternativeName>
        <fullName>1,4-beta-D-xylan xylanohydrolase A</fullName>
    </alternativeName>
</protein>
<gene>
    <name type="primary">xynA</name>
    <name type="ordered locus">BH2120</name>
</gene>
<feature type="signal peptide" evidence="4">
    <location>
        <begin position="1"/>
        <end position="28"/>
    </location>
</feature>
<feature type="chain" id="PRO_0000007967" description="Endo-1,4-beta-xylanase A">
    <location>
        <begin position="29"/>
        <end position="396"/>
    </location>
</feature>
<feature type="domain" description="GH10" evidence="2">
    <location>
        <begin position="51"/>
        <end position="396"/>
    </location>
</feature>
<feature type="active site" description="Proton donor" evidence="1">
    <location>
        <position position="195"/>
    </location>
</feature>
<feature type="active site" description="Nucleophile" evidence="3">
    <location>
        <position position="301"/>
    </location>
</feature>
<feature type="helix" evidence="6">
    <location>
        <begin position="51"/>
        <end position="53"/>
    </location>
</feature>
<feature type="helix" evidence="6">
    <location>
        <begin position="57"/>
        <end position="60"/>
    </location>
</feature>
<feature type="turn" evidence="6">
    <location>
        <begin position="61"/>
        <end position="64"/>
    </location>
</feature>
<feature type="strand" evidence="6">
    <location>
        <begin position="66"/>
        <end position="71"/>
    </location>
</feature>
<feature type="helix" evidence="6">
    <location>
        <begin position="73"/>
        <end position="75"/>
    </location>
</feature>
<feature type="helix" evidence="6">
    <location>
        <begin position="78"/>
        <end position="87"/>
    </location>
</feature>
<feature type="strand" evidence="6">
    <location>
        <begin position="89"/>
        <end position="95"/>
    </location>
</feature>
<feature type="helix" evidence="6">
    <location>
        <begin position="99"/>
        <end position="102"/>
    </location>
</feature>
<feature type="helix" evidence="6">
    <location>
        <begin position="112"/>
        <end position="123"/>
    </location>
</feature>
<feature type="strand" evidence="6">
    <location>
        <begin position="127"/>
        <end position="130"/>
    </location>
</feature>
<feature type="strand" evidence="6">
    <location>
        <begin position="133"/>
        <end position="138"/>
    </location>
</feature>
<feature type="helix" evidence="6">
    <location>
        <begin position="141"/>
        <end position="144"/>
    </location>
</feature>
<feature type="helix" evidence="6">
    <location>
        <begin position="152"/>
        <end position="154"/>
    </location>
</feature>
<feature type="helix" evidence="6">
    <location>
        <begin position="158"/>
        <end position="183"/>
    </location>
</feature>
<feature type="turn" evidence="6">
    <location>
        <begin position="184"/>
        <end position="186"/>
    </location>
</feature>
<feature type="strand" evidence="6">
    <location>
        <begin position="188"/>
        <end position="195"/>
    </location>
</feature>
<feature type="strand" evidence="6">
    <location>
        <begin position="201"/>
        <end position="203"/>
    </location>
</feature>
<feature type="helix" evidence="6">
    <location>
        <begin position="207"/>
        <end position="212"/>
    </location>
</feature>
<feature type="helix" evidence="6">
    <location>
        <begin position="215"/>
        <end position="228"/>
    </location>
</feature>
<feature type="strand" evidence="6">
    <location>
        <begin position="234"/>
        <end position="239"/>
    </location>
</feature>
<feature type="helix" evidence="6">
    <location>
        <begin position="244"/>
        <end position="259"/>
    </location>
</feature>
<feature type="strand" evidence="6">
    <location>
        <begin position="266"/>
        <end position="269"/>
    </location>
</feature>
<feature type="strand" evidence="6">
    <location>
        <begin position="272"/>
        <end position="276"/>
    </location>
</feature>
<feature type="helix" evidence="6">
    <location>
        <begin position="280"/>
        <end position="291"/>
    </location>
</feature>
<feature type="turn" evidence="6">
    <location>
        <begin position="292"/>
        <end position="294"/>
    </location>
</feature>
<feature type="strand" evidence="6">
    <location>
        <begin position="296"/>
        <end position="307"/>
    </location>
</feature>
<feature type="helix" evidence="6">
    <location>
        <begin position="318"/>
        <end position="320"/>
    </location>
</feature>
<feature type="helix" evidence="6">
    <location>
        <begin position="323"/>
        <end position="342"/>
    </location>
</feature>
<feature type="helix" evidence="6">
    <location>
        <begin position="344"/>
        <end position="346"/>
    </location>
</feature>
<feature type="strand" evidence="6">
    <location>
        <begin position="347"/>
        <end position="353"/>
    </location>
</feature>
<feature type="helix" evidence="6">
    <location>
        <begin position="361"/>
        <end position="368"/>
    </location>
</feature>
<feature type="turn" evidence="6">
    <location>
        <begin position="369"/>
        <end position="372"/>
    </location>
</feature>
<feature type="strand" evidence="6">
    <location>
        <begin position="379"/>
        <end position="381"/>
    </location>
</feature>
<feature type="strand" evidence="6">
    <location>
        <begin position="385"/>
        <end position="387"/>
    </location>
</feature>
<feature type="helix" evidence="6">
    <location>
        <begin position="389"/>
        <end position="395"/>
    </location>
</feature>